<keyword id="KW-1015">Disulfide bond</keyword>
<keyword id="KW-0676">Redox-active center</keyword>
<keyword id="KW-1185">Reference proteome</keyword>
<reference key="1">
    <citation type="journal article" date="1998" name="J. Mol. Biol.">
        <title>Genome structure of mycobacteriophage D29: implications for phage evolution.</title>
        <authorList>
            <person name="Ford M.E."/>
            <person name="Sarkis G.J."/>
            <person name="Belanger A.E."/>
            <person name="Hendrix R.W."/>
            <person name="Hatfull G.F."/>
        </authorList>
    </citation>
    <scope>NUCLEOTIDE SEQUENCE [LARGE SCALE GENOMIC DNA]</scope>
</reference>
<organism>
    <name type="scientific">Mycobacterium phage D29</name>
    <name type="common">Mycobacteriophage D29</name>
    <dbReference type="NCBI Taxonomy" id="28369"/>
    <lineage>
        <taxon>Viruses</taxon>
        <taxon>Duplodnaviria</taxon>
        <taxon>Heunggongvirae</taxon>
        <taxon>Uroviricota</taxon>
        <taxon>Caudoviricetes</taxon>
        <taxon>Fromanvirus</taxon>
    </lineage>
</organism>
<proteinExistence type="predicted"/>
<gene>
    <name type="primary">56</name>
</gene>
<organismHost>
    <name type="scientific">Mycobacterium</name>
    <dbReference type="NCBI Taxonomy" id="1763"/>
</organismHost>
<evidence type="ECO:0000255" key="1">
    <source>
        <dbReference type="PROSITE-ProRule" id="PRU00686"/>
    </source>
</evidence>
<evidence type="ECO:0000255" key="2">
    <source>
        <dbReference type="PROSITE-ProRule" id="PRU01282"/>
    </source>
</evidence>
<accession>O64247</accession>
<name>VG56_BPMD2</name>
<dbReference type="EMBL" id="AF022214">
    <property type="protein sequence ID" value="AAC18497.1"/>
    <property type="molecule type" value="Genomic_DNA"/>
</dbReference>
<dbReference type="PIR" id="F72806">
    <property type="entry name" value="F72806"/>
</dbReference>
<dbReference type="RefSeq" id="NP_046872.1">
    <property type="nucleotide sequence ID" value="NC_001900.1"/>
</dbReference>
<dbReference type="SMR" id="O64247"/>
<dbReference type="GeneID" id="1261609"/>
<dbReference type="KEGG" id="vg:1261609"/>
<dbReference type="OrthoDB" id="18944at10239"/>
<dbReference type="Proteomes" id="UP000002131">
    <property type="component" value="Segment"/>
</dbReference>
<dbReference type="GO" id="GO:0009055">
    <property type="term" value="F:electron transfer activity"/>
    <property type="evidence" value="ECO:0007669"/>
    <property type="project" value="TreeGrafter"/>
</dbReference>
<dbReference type="CDD" id="cd02976">
    <property type="entry name" value="NrdH"/>
    <property type="match status" value="1"/>
</dbReference>
<dbReference type="Gene3D" id="3.40.30.10">
    <property type="entry name" value="Glutaredoxin"/>
    <property type="match status" value="1"/>
</dbReference>
<dbReference type="InterPro" id="IPR006660">
    <property type="entry name" value="Arsenate_reductase-like"/>
</dbReference>
<dbReference type="InterPro" id="IPR002109">
    <property type="entry name" value="Glutaredoxin"/>
</dbReference>
<dbReference type="InterPro" id="IPR051548">
    <property type="entry name" value="Grx-like_ET"/>
</dbReference>
<dbReference type="InterPro" id="IPR036249">
    <property type="entry name" value="Thioredoxin-like_sf"/>
</dbReference>
<dbReference type="PANTHER" id="PTHR34386">
    <property type="entry name" value="GLUTAREDOXIN"/>
    <property type="match status" value="1"/>
</dbReference>
<dbReference type="PANTHER" id="PTHR34386:SF1">
    <property type="entry name" value="GLUTAREDOXIN-LIKE PROTEIN NRDH"/>
    <property type="match status" value="1"/>
</dbReference>
<dbReference type="Pfam" id="PF00462">
    <property type="entry name" value="Glutaredoxin"/>
    <property type="match status" value="1"/>
</dbReference>
<dbReference type="SUPFAM" id="SSF52833">
    <property type="entry name" value="Thioredoxin-like"/>
    <property type="match status" value="1"/>
</dbReference>
<dbReference type="PROSITE" id="PS51354">
    <property type="entry name" value="GLUTAREDOXIN_2"/>
    <property type="match status" value="1"/>
</dbReference>
<sequence>MRTMFTPITIYTQPGCRPCHRIQQFLDDAGVEYDVVDLTRNAEAKTYVQDVLKASSVPVIVTDHFEPIIGYQPDKVDELIDYYTASETGL</sequence>
<feature type="chain" id="PRO_0000164786" description="Gene 56 protein">
    <location>
        <begin position="1"/>
        <end position="90"/>
    </location>
</feature>
<feature type="domain" description="Glutaredoxin" evidence="1">
    <location>
        <begin position="1"/>
        <end position="90"/>
    </location>
</feature>
<feature type="disulfide bond" description="Redox-active" evidence="2">
    <location>
        <begin position="16"/>
        <end position="19"/>
    </location>
</feature>
<protein>
    <recommendedName>
        <fullName>Gene 56 protein</fullName>
    </recommendedName>
    <alternativeName>
        <fullName>Gp56</fullName>
    </alternativeName>
</protein>